<evidence type="ECO:0000255" key="1">
    <source>
        <dbReference type="HAMAP-Rule" id="MF_00120"/>
    </source>
</evidence>
<sequence length="493" mass="53180">MTELNKLTVADSVKGLKNKDFTSKELVNAHIKQIEKHKNLNAYVTETFDLALKQAEAADQNYAQNQPQTLEGIPFAAKDLFCTKGIRTTACSNILKNFIPNYESSVTQNIFDKGGVMLGKTNMDEFAMGSANITSCFGNVISPWKANDDNADLVPGGSSGGSAAAVSGFMASAALGSDTGGSVRQPASFTGLVGFKPTYGRCSRYGMVSFASSLDQAGIFTRSVLDSSIMLEAMMGFDEKDSTSIKAEVPELQSAIGSSMKNMKIGVPLSLGEGGIIEPDIMKMWQDTIELLKNAGAEIVDITLPHAKYGVAVYYVIAPAEASSNLSRYDGVRYGLRVERENMTLDEMYEMTRSAGFGEEVKRRIMIGTYVLSSSCMDAYYLKAQKVRRLVANDFNNAFAKVDAILLPAAPTEAFKIGEKQNDPTIMYLNDLFTIPASLAGLPCASVPAGLSARGLPLGMQIIGKQLDEYNVLKVASTIESGVKHIKFEPKGF</sequence>
<accession>Q4UKF1</accession>
<dbReference type="EC" id="6.3.5.7" evidence="1"/>
<dbReference type="EMBL" id="CP000053">
    <property type="protein sequence ID" value="AAY61980.1"/>
    <property type="molecule type" value="Genomic_DNA"/>
</dbReference>
<dbReference type="SMR" id="Q4UKF1"/>
<dbReference type="STRING" id="315456.RF_1129"/>
<dbReference type="KEGG" id="rfe:RF_1129"/>
<dbReference type="eggNOG" id="COG0154">
    <property type="taxonomic scope" value="Bacteria"/>
</dbReference>
<dbReference type="HOGENOM" id="CLU_009600_0_3_5"/>
<dbReference type="OrthoDB" id="9811471at2"/>
<dbReference type="Proteomes" id="UP000008548">
    <property type="component" value="Chromosome"/>
</dbReference>
<dbReference type="GO" id="GO:0030956">
    <property type="term" value="C:glutamyl-tRNA(Gln) amidotransferase complex"/>
    <property type="evidence" value="ECO:0007669"/>
    <property type="project" value="InterPro"/>
</dbReference>
<dbReference type="GO" id="GO:0005524">
    <property type="term" value="F:ATP binding"/>
    <property type="evidence" value="ECO:0007669"/>
    <property type="project" value="UniProtKB-KW"/>
</dbReference>
<dbReference type="GO" id="GO:0050567">
    <property type="term" value="F:glutaminyl-tRNA synthase (glutamine-hydrolyzing) activity"/>
    <property type="evidence" value="ECO:0007669"/>
    <property type="project" value="UniProtKB-UniRule"/>
</dbReference>
<dbReference type="GO" id="GO:0006412">
    <property type="term" value="P:translation"/>
    <property type="evidence" value="ECO:0007669"/>
    <property type="project" value="UniProtKB-UniRule"/>
</dbReference>
<dbReference type="Gene3D" id="3.90.1300.10">
    <property type="entry name" value="Amidase signature (AS) domain"/>
    <property type="match status" value="1"/>
</dbReference>
<dbReference type="HAMAP" id="MF_00120">
    <property type="entry name" value="GatA"/>
    <property type="match status" value="1"/>
</dbReference>
<dbReference type="InterPro" id="IPR000120">
    <property type="entry name" value="Amidase"/>
</dbReference>
<dbReference type="InterPro" id="IPR020556">
    <property type="entry name" value="Amidase_CS"/>
</dbReference>
<dbReference type="InterPro" id="IPR023631">
    <property type="entry name" value="Amidase_dom"/>
</dbReference>
<dbReference type="InterPro" id="IPR036928">
    <property type="entry name" value="AS_sf"/>
</dbReference>
<dbReference type="InterPro" id="IPR004412">
    <property type="entry name" value="GatA"/>
</dbReference>
<dbReference type="NCBIfam" id="TIGR00132">
    <property type="entry name" value="gatA"/>
    <property type="match status" value="1"/>
</dbReference>
<dbReference type="PANTHER" id="PTHR11895:SF151">
    <property type="entry name" value="GLUTAMYL-TRNA(GLN) AMIDOTRANSFERASE SUBUNIT A"/>
    <property type="match status" value="1"/>
</dbReference>
<dbReference type="PANTHER" id="PTHR11895">
    <property type="entry name" value="TRANSAMIDASE"/>
    <property type="match status" value="1"/>
</dbReference>
<dbReference type="Pfam" id="PF01425">
    <property type="entry name" value="Amidase"/>
    <property type="match status" value="1"/>
</dbReference>
<dbReference type="SUPFAM" id="SSF75304">
    <property type="entry name" value="Amidase signature (AS) enzymes"/>
    <property type="match status" value="1"/>
</dbReference>
<dbReference type="PROSITE" id="PS00571">
    <property type="entry name" value="AMIDASES"/>
    <property type="match status" value="1"/>
</dbReference>
<reference key="1">
    <citation type="journal article" date="2005" name="PLoS Biol.">
        <title>The genome sequence of Rickettsia felis identifies the first putative conjugative plasmid in an obligate intracellular parasite.</title>
        <authorList>
            <person name="Ogata H."/>
            <person name="Renesto P."/>
            <person name="Audic S."/>
            <person name="Robert C."/>
            <person name="Blanc G."/>
            <person name="Fournier P.-E."/>
            <person name="Parinello H."/>
            <person name="Claverie J.-M."/>
            <person name="Raoult D."/>
        </authorList>
    </citation>
    <scope>NUCLEOTIDE SEQUENCE [LARGE SCALE GENOMIC DNA]</scope>
    <source>
        <strain>ATCC VR-1525 / URRWXCal2</strain>
    </source>
</reference>
<organism>
    <name type="scientific">Rickettsia felis (strain ATCC VR-1525 / URRWXCal2)</name>
    <name type="common">Rickettsia azadi</name>
    <dbReference type="NCBI Taxonomy" id="315456"/>
    <lineage>
        <taxon>Bacteria</taxon>
        <taxon>Pseudomonadati</taxon>
        <taxon>Pseudomonadota</taxon>
        <taxon>Alphaproteobacteria</taxon>
        <taxon>Rickettsiales</taxon>
        <taxon>Rickettsiaceae</taxon>
        <taxon>Rickettsieae</taxon>
        <taxon>Rickettsia</taxon>
        <taxon>spotted fever group</taxon>
    </lineage>
</organism>
<gene>
    <name evidence="1" type="primary">gatA</name>
    <name type="ordered locus">RF_1129</name>
</gene>
<comment type="function">
    <text evidence="1">Allows the formation of correctly charged Gln-tRNA(Gln) through the transamidation of misacylated Glu-tRNA(Gln) in organisms which lack glutaminyl-tRNA synthetase. The reaction takes place in the presence of glutamine and ATP through an activated gamma-phospho-Glu-tRNA(Gln).</text>
</comment>
<comment type="catalytic activity">
    <reaction evidence="1">
        <text>L-glutamyl-tRNA(Gln) + L-glutamine + ATP + H2O = L-glutaminyl-tRNA(Gln) + L-glutamate + ADP + phosphate + H(+)</text>
        <dbReference type="Rhea" id="RHEA:17521"/>
        <dbReference type="Rhea" id="RHEA-COMP:9681"/>
        <dbReference type="Rhea" id="RHEA-COMP:9684"/>
        <dbReference type="ChEBI" id="CHEBI:15377"/>
        <dbReference type="ChEBI" id="CHEBI:15378"/>
        <dbReference type="ChEBI" id="CHEBI:29985"/>
        <dbReference type="ChEBI" id="CHEBI:30616"/>
        <dbReference type="ChEBI" id="CHEBI:43474"/>
        <dbReference type="ChEBI" id="CHEBI:58359"/>
        <dbReference type="ChEBI" id="CHEBI:78520"/>
        <dbReference type="ChEBI" id="CHEBI:78521"/>
        <dbReference type="ChEBI" id="CHEBI:456216"/>
        <dbReference type="EC" id="6.3.5.7"/>
    </reaction>
</comment>
<comment type="subunit">
    <text evidence="1">Heterotrimer of A, B and C subunits.</text>
</comment>
<comment type="similarity">
    <text evidence="1">Belongs to the amidase family. GatA subfamily.</text>
</comment>
<feature type="chain" id="PRO_0000241149" description="Glutamyl-tRNA(Gln) amidotransferase subunit A">
    <location>
        <begin position="1"/>
        <end position="493"/>
    </location>
</feature>
<feature type="active site" description="Charge relay system" evidence="1">
    <location>
        <position position="78"/>
    </location>
</feature>
<feature type="active site" description="Charge relay system" evidence="1">
    <location>
        <position position="158"/>
    </location>
</feature>
<feature type="active site" description="Acyl-ester intermediate" evidence="1">
    <location>
        <position position="182"/>
    </location>
</feature>
<proteinExistence type="inferred from homology"/>
<name>GATA_RICFE</name>
<protein>
    <recommendedName>
        <fullName evidence="1">Glutamyl-tRNA(Gln) amidotransferase subunit A</fullName>
        <shortName evidence="1">Glu-ADT subunit A</shortName>
        <ecNumber evidence="1">6.3.5.7</ecNumber>
    </recommendedName>
</protein>
<keyword id="KW-0067">ATP-binding</keyword>
<keyword id="KW-0436">Ligase</keyword>
<keyword id="KW-0547">Nucleotide-binding</keyword>
<keyword id="KW-0648">Protein biosynthesis</keyword>